<evidence type="ECO:0000250" key="1"/>
<evidence type="ECO:0000255" key="2"/>
<evidence type="ECO:0000255" key="3">
    <source>
        <dbReference type="PROSITE-ProRule" id="PRU00274"/>
    </source>
</evidence>
<evidence type="ECO:0000255" key="4">
    <source>
        <dbReference type="PROSITE-ProRule" id="PRU00315"/>
    </source>
</evidence>
<proteinExistence type="evidence at transcript level"/>
<organism>
    <name type="scientific">Bos taurus</name>
    <name type="common">Bovine</name>
    <dbReference type="NCBI Taxonomy" id="9913"/>
    <lineage>
        <taxon>Eukaryota</taxon>
        <taxon>Metazoa</taxon>
        <taxon>Chordata</taxon>
        <taxon>Craniata</taxon>
        <taxon>Vertebrata</taxon>
        <taxon>Euteleostomi</taxon>
        <taxon>Mammalia</taxon>
        <taxon>Eutheria</taxon>
        <taxon>Laurasiatheria</taxon>
        <taxon>Artiodactyla</taxon>
        <taxon>Ruminantia</taxon>
        <taxon>Pecora</taxon>
        <taxon>Bovidae</taxon>
        <taxon>Bovinae</taxon>
        <taxon>Bos</taxon>
    </lineage>
</organism>
<accession>Q2KJ63</accession>
<keyword id="KW-0094">Blood coagulation</keyword>
<keyword id="KW-1015">Disulfide bond</keyword>
<keyword id="KW-0280">Fibrinolysis</keyword>
<keyword id="KW-0325">Glycoprotein</keyword>
<keyword id="KW-0356">Hemostasis</keyword>
<keyword id="KW-0378">Hydrolase</keyword>
<keyword id="KW-0395">Inflammatory response</keyword>
<keyword id="KW-0645">Protease</keyword>
<keyword id="KW-1185">Reference proteome</keyword>
<keyword id="KW-0677">Repeat</keyword>
<keyword id="KW-0964">Secreted</keyword>
<keyword id="KW-0720">Serine protease</keyword>
<keyword id="KW-0732">Signal</keyword>
<keyword id="KW-0865">Zymogen</keyword>
<protein>
    <recommendedName>
        <fullName>Plasma kallikrein</fullName>
        <ecNumber>3.4.21.34</ecNumber>
    </recommendedName>
    <alternativeName>
        <fullName>Fletcher factor</fullName>
    </alternativeName>
    <alternativeName>
        <fullName>Kininogenin</fullName>
    </alternativeName>
    <alternativeName>
        <fullName>Plasma prekallikrein</fullName>
    </alternativeName>
    <component>
        <recommendedName>
            <fullName>Plasma kallikrein heavy chain</fullName>
        </recommendedName>
    </component>
    <component>
        <recommendedName>
            <fullName>Plasma kallikrein light chain</fullName>
        </recommendedName>
    </component>
</protein>
<gene>
    <name type="primary">KLKB1</name>
</gene>
<reference key="1">
    <citation type="submission" date="2005-09" db="EMBL/GenBank/DDBJ databases">
        <authorList>
            <consortium name="NIH - Mammalian Gene Collection (MGC) project"/>
        </authorList>
    </citation>
    <scope>NUCLEOTIDE SEQUENCE [LARGE SCALE MRNA]</scope>
    <source>
        <strain>Hereford</strain>
        <tissue>Fetal liver</tissue>
    </source>
</reference>
<name>KLKB1_BOVIN</name>
<comment type="function">
    <text evidence="1">The enzyme cleaves Lys-Arg and Arg-Ser bonds. It activates, in a reciprocal reaction, factor XII after its binding to a negatively charged surface. It also releases bradykinin from HMW kininogen and may also play a role in the renin-angiotensin system by converting prorenin into renin (By similarity).</text>
</comment>
<comment type="catalytic activity">
    <reaction>
        <text>Cleaves selectively Arg-|-Xaa and Lys-|-Xaa bonds, including Lys-|-Arg and Arg-|-Ser bonds in (human) kininogen to release bradykinin.</text>
        <dbReference type="EC" id="3.4.21.34"/>
    </reaction>
</comment>
<comment type="activity regulation">
    <text evidence="1">Inhibited by SERPINA5.</text>
</comment>
<comment type="subunit">
    <text evidence="1">Forms a heterodimer with SERPINA5. The zymogen is activated by factor XIIa, which cleaves the molecule into a light chain, which contains the active site, and a heavy chain, which associates with HMW kininogen. These chains are linked by one or more disulfide bonds (By similarity).</text>
</comment>
<comment type="subcellular location">
    <subcellularLocation>
        <location evidence="1">Secreted</location>
    </subcellularLocation>
</comment>
<comment type="similarity">
    <text evidence="3">Belongs to the peptidase S1 family. Plasma kallikrein subfamily.</text>
</comment>
<feature type="signal peptide" evidence="1">
    <location>
        <begin position="1"/>
        <end position="19"/>
    </location>
</feature>
<feature type="chain" id="PRO_0000285880" description="Plasma kallikrein heavy chain">
    <location>
        <begin position="20"/>
        <end position="391"/>
    </location>
</feature>
<feature type="chain" id="PRO_0000285881" description="Plasma kallikrein light chain">
    <location>
        <begin position="392"/>
        <end position="636"/>
    </location>
</feature>
<feature type="domain" description="Apple 1" evidence="4">
    <location>
        <begin position="21"/>
        <end position="104"/>
    </location>
</feature>
<feature type="domain" description="Apple 2" evidence="4">
    <location>
        <begin position="111"/>
        <end position="194"/>
    </location>
</feature>
<feature type="domain" description="Apple 3" evidence="4">
    <location>
        <begin position="201"/>
        <end position="284"/>
    </location>
</feature>
<feature type="domain" description="Apple 4" evidence="4">
    <location>
        <begin position="294"/>
        <end position="377"/>
    </location>
</feature>
<feature type="domain" description="Peptidase S1" evidence="3">
    <location>
        <begin position="392"/>
        <end position="627"/>
    </location>
</feature>
<feature type="active site" description="Charge relay system" evidence="1">
    <location>
        <position position="435"/>
    </location>
</feature>
<feature type="active site" description="Charge relay system" evidence="1">
    <location>
        <position position="484"/>
    </location>
</feature>
<feature type="active site" description="Charge relay system" evidence="1">
    <location>
        <position position="579"/>
    </location>
</feature>
<feature type="glycosylation site" description="N-linked (GlcNAc...) asparagine" evidence="2">
    <location>
        <position position="66"/>
    </location>
</feature>
<feature type="glycosylation site" description="N-linked (GlcNAc...) asparagine" evidence="2">
    <location>
        <position position="127"/>
    </location>
</feature>
<feature type="glycosylation site" description="N-linked (GlcNAc...) asparagine" evidence="2">
    <location>
        <position position="361"/>
    </location>
</feature>
<feature type="glycosylation site" description="N-linked (GlcNAc...) asparagine" evidence="2">
    <location>
        <position position="397"/>
    </location>
</feature>
<feature type="glycosylation site" description="N-linked (GlcNAc...) asparagine" evidence="2">
    <location>
        <position position="454"/>
    </location>
</feature>
<feature type="glycosylation site" description="N-linked (GlcNAc...) asparagine" evidence="2">
    <location>
        <position position="495"/>
    </location>
</feature>
<feature type="disulfide bond" evidence="1">
    <location>
        <begin position="21"/>
        <end position="104"/>
    </location>
</feature>
<feature type="disulfide bond" evidence="1">
    <location>
        <begin position="47"/>
        <end position="77"/>
    </location>
</feature>
<feature type="disulfide bond" evidence="1">
    <location>
        <begin position="51"/>
        <end position="57"/>
    </location>
</feature>
<feature type="disulfide bond" evidence="1">
    <location>
        <begin position="111"/>
        <end position="194"/>
    </location>
</feature>
<feature type="disulfide bond" evidence="1">
    <location>
        <begin position="137"/>
        <end position="166"/>
    </location>
</feature>
<feature type="disulfide bond" evidence="1">
    <location>
        <begin position="141"/>
        <end position="147"/>
    </location>
</feature>
<feature type="disulfide bond" evidence="1">
    <location>
        <begin position="201"/>
        <end position="284"/>
    </location>
</feature>
<feature type="disulfide bond" evidence="1">
    <location>
        <begin position="227"/>
        <end position="256"/>
    </location>
</feature>
<feature type="disulfide bond" evidence="1">
    <location>
        <begin position="231"/>
        <end position="237"/>
    </location>
</feature>
<feature type="disulfide bond" evidence="1">
    <location>
        <begin position="294"/>
        <end position="377"/>
    </location>
</feature>
<feature type="disulfide bond" evidence="1">
    <location>
        <begin position="320"/>
        <end position="349"/>
    </location>
</feature>
<feature type="disulfide bond" evidence="1">
    <location>
        <begin position="324"/>
        <end position="330"/>
    </location>
</feature>
<feature type="disulfide bond" evidence="1">
    <location>
        <begin position="420"/>
        <end position="436"/>
    </location>
</feature>
<feature type="disulfide bond" evidence="1">
    <location>
        <begin position="518"/>
        <end position="585"/>
    </location>
</feature>
<feature type="disulfide bond" evidence="1">
    <location>
        <begin position="549"/>
        <end position="564"/>
    </location>
</feature>
<feature type="disulfide bond" evidence="1">
    <location>
        <begin position="575"/>
        <end position="603"/>
    </location>
</feature>
<sequence length="636" mass="70994">MIALRQAAYFICLFATVSCGCLTQLYHNIFFRGGDVSAMYTPDAQYCQLMCTFHPRCLLFSFLPENSTSDADKRFGCFLKDSVTGTLPRVSRTGAISGHSLKRCGHQISACHRSIYKGIDMRGVNFNASKVRSAKECQERCTNNIHCQFFTYATKTFFSAEYRNTCLLKRSPQGTPTRIKVLSDVESGFSLKACGNSKIGCRVDIFQHSAFSDVDVAGIIAPDAFVCRTICTYHPSCLFFTFYTNAWKTDSQRNVCFLKTSQSGSPSSPTPQENAISGYSLLTCKQTLPGTEPCHSKIYPQVAFEGEELHVTFVKGVDGCQETCTKMIRCQFFTYSLFPEDCRGEKCKCSLRLSLDGSPTNITYGTQASSGYSLRLCKRGDSRVCTTKRTRIVGGTNASWGEWPWQVSLQVKQRAQSHLCGGSIIGRQWVLTAAHCFDGLLLSNIWRIYGGILNLSEITTETSFSQIKEIIVHPNYKISEGSHDIALIKLEAPLNFTDLQKAICLPSKDDTKPVYTDCWITGWGFTEEKGKIQNTLQKANIPLISNEECQKSYRDYKITKQMICAGYKEGGKDACKGDSGGPLVCQHEETWHLVGITSWGEGCARREQPGVYTKVAEYVDWILEKTQDSHGQPLRK</sequence>
<dbReference type="EC" id="3.4.21.34"/>
<dbReference type="EMBL" id="BC105498">
    <property type="protein sequence ID" value="AAI05499.1"/>
    <property type="molecule type" value="mRNA"/>
</dbReference>
<dbReference type="RefSeq" id="NP_001039817.1">
    <property type="nucleotide sequence ID" value="NM_001046352.2"/>
</dbReference>
<dbReference type="SMR" id="Q2KJ63"/>
<dbReference type="FunCoup" id="Q2KJ63">
    <property type="interactions" value="104"/>
</dbReference>
<dbReference type="STRING" id="9913.ENSBTAP00000012503"/>
<dbReference type="MEROPS" id="S01.212"/>
<dbReference type="GlyCosmos" id="Q2KJ63">
    <property type="glycosylation" value="6 sites, No reported glycans"/>
</dbReference>
<dbReference type="GlyGen" id="Q2KJ63">
    <property type="glycosylation" value="6 sites"/>
</dbReference>
<dbReference type="PaxDb" id="9913-ENSBTAP00000012503"/>
<dbReference type="Ensembl" id="ENSBTAT00000012503.7">
    <property type="protein sequence ID" value="ENSBTAP00000012503.5"/>
    <property type="gene ID" value="ENSBTAG00000009501.7"/>
</dbReference>
<dbReference type="GeneID" id="533547"/>
<dbReference type="KEGG" id="bta:533547"/>
<dbReference type="CTD" id="3818"/>
<dbReference type="VEuPathDB" id="HostDB:ENSBTAG00000009501"/>
<dbReference type="VGNC" id="VGNC:30683">
    <property type="gene designation" value="KLKB1"/>
</dbReference>
<dbReference type="eggNOG" id="KOG3627">
    <property type="taxonomic scope" value="Eukaryota"/>
</dbReference>
<dbReference type="GeneTree" id="ENSGT00940000161669"/>
<dbReference type="HOGENOM" id="CLU_031604_0_0_1"/>
<dbReference type="InParanoid" id="Q2KJ63"/>
<dbReference type="OMA" id="TAMYTPN"/>
<dbReference type="OrthoDB" id="9448935at2759"/>
<dbReference type="TreeFam" id="TF343687"/>
<dbReference type="Reactome" id="R-BTA-140837">
    <property type="pathway name" value="Intrinsic Pathway of Fibrin Clot Formation"/>
</dbReference>
<dbReference type="Reactome" id="R-BTA-1592389">
    <property type="pathway name" value="Activation of Matrix Metalloproteinases"/>
</dbReference>
<dbReference type="Proteomes" id="UP000009136">
    <property type="component" value="Chromosome 27"/>
</dbReference>
<dbReference type="Bgee" id="ENSBTAG00000009501">
    <property type="expression patterns" value="Expressed in liver and 16 other cell types or tissues"/>
</dbReference>
<dbReference type="GO" id="GO:0005576">
    <property type="term" value="C:extracellular region"/>
    <property type="evidence" value="ECO:0007669"/>
    <property type="project" value="UniProtKB-SubCell"/>
</dbReference>
<dbReference type="GO" id="GO:0042803">
    <property type="term" value="F:protein homodimerization activity"/>
    <property type="evidence" value="ECO:0000314"/>
    <property type="project" value="AgBase"/>
</dbReference>
<dbReference type="GO" id="GO:0004252">
    <property type="term" value="F:serine-type endopeptidase activity"/>
    <property type="evidence" value="ECO:0007669"/>
    <property type="project" value="UniProtKB-EC"/>
</dbReference>
<dbReference type="GO" id="GO:0007596">
    <property type="term" value="P:blood coagulation"/>
    <property type="evidence" value="ECO:0007669"/>
    <property type="project" value="UniProtKB-KW"/>
</dbReference>
<dbReference type="GO" id="GO:0042730">
    <property type="term" value="P:fibrinolysis"/>
    <property type="evidence" value="ECO:0007669"/>
    <property type="project" value="UniProtKB-KW"/>
</dbReference>
<dbReference type="GO" id="GO:0006954">
    <property type="term" value="P:inflammatory response"/>
    <property type="evidence" value="ECO:0007669"/>
    <property type="project" value="UniProtKB-KW"/>
</dbReference>
<dbReference type="GO" id="GO:0006508">
    <property type="term" value="P:proteolysis"/>
    <property type="evidence" value="ECO:0007669"/>
    <property type="project" value="UniProtKB-KW"/>
</dbReference>
<dbReference type="CDD" id="cd01100">
    <property type="entry name" value="APPLE_Factor_XI_like"/>
    <property type="match status" value="4"/>
</dbReference>
<dbReference type="CDD" id="cd00190">
    <property type="entry name" value="Tryp_SPc"/>
    <property type="match status" value="1"/>
</dbReference>
<dbReference type="FunFam" id="3.50.4.10:FF:000001">
    <property type="entry name" value="Coagulation factor XI"/>
    <property type="match status" value="4"/>
</dbReference>
<dbReference type="FunFam" id="2.40.10.10:FF:000003">
    <property type="entry name" value="Transmembrane serine protease 3"/>
    <property type="match status" value="1"/>
</dbReference>
<dbReference type="Gene3D" id="3.50.4.10">
    <property type="entry name" value="Hepatocyte Growth Factor"/>
    <property type="match status" value="4"/>
</dbReference>
<dbReference type="Gene3D" id="2.40.10.10">
    <property type="entry name" value="Trypsin-like serine proteases"/>
    <property type="match status" value="1"/>
</dbReference>
<dbReference type="InterPro" id="IPR000177">
    <property type="entry name" value="Apple"/>
</dbReference>
<dbReference type="InterPro" id="IPR003609">
    <property type="entry name" value="Pan_app"/>
</dbReference>
<dbReference type="InterPro" id="IPR009003">
    <property type="entry name" value="Peptidase_S1_PA"/>
</dbReference>
<dbReference type="InterPro" id="IPR043504">
    <property type="entry name" value="Peptidase_S1_PA_chymotrypsin"/>
</dbReference>
<dbReference type="InterPro" id="IPR001314">
    <property type="entry name" value="Peptidase_S1A"/>
</dbReference>
<dbReference type="InterPro" id="IPR001254">
    <property type="entry name" value="Trypsin_dom"/>
</dbReference>
<dbReference type="InterPro" id="IPR018114">
    <property type="entry name" value="TRYPSIN_HIS"/>
</dbReference>
<dbReference type="InterPro" id="IPR033116">
    <property type="entry name" value="TRYPSIN_SER"/>
</dbReference>
<dbReference type="PANTHER" id="PTHR24252">
    <property type="entry name" value="ACROSIN-RELATED"/>
    <property type="match status" value="1"/>
</dbReference>
<dbReference type="PANTHER" id="PTHR24252:SF7">
    <property type="entry name" value="HYALIN"/>
    <property type="match status" value="1"/>
</dbReference>
<dbReference type="Pfam" id="PF00024">
    <property type="entry name" value="PAN_1"/>
    <property type="match status" value="4"/>
</dbReference>
<dbReference type="Pfam" id="PF00089">
    <property type="entry name" value="Trypsin"/>
    <property type="match status" value="1"/>
</dbReference>
<dbReference type="PRINTS" id="PR00005">
    <property type="entry name" value="APPLEDOMAIN"/>
</dbReference>
<dbReference type="PRINTS" id="PR00722">
    <property type="entry name" value="CHYMOTRYPSIN"/>
</dbReference>
<dbReference type="SMART" id="SM00223">
    <property type="entry name" value="APPLE"/>
    <property type="match status" value="4"/>
</dbReference>
<dbReference type="SMART" id="SM00020">
    <property type="entry name" value="Tryp_SPc"/>
    <property type="match status" value="1"/>
</dbReference>
<dbReference type="SUPFAM" id="SSF50494">
    <property type="entry name" value="Trypsin-like serine proteases"/>
    <property type="match status" value="1"/>
</dbReference>
<dbReference type="PROSITE" id="PS00495">
    <property type="entry name" value="APPLE"/>
    <property type="match status" value="4"/>
</dbReference>
<dbReference type="PROSITE" id="PS50948">
    <property type="entry name" value="PAN"/>
    <property type="match status" value="4"/>
</dbReference>
<dbReference type="PROSITE" id="PS50240">
    <property type="entry name" value="TRYPSIN_DOM"/>
    <property type="match status" value="1"/>
</dbReference>
<dbReference type="PROSITE" id="PS00134">
    <property type="entry name" value="TRYPSIN_HIS"/>
    <property type="match status" value="1"/>
</dbReference>
<dbReference type="PROSITE" id="PS00135">
    <property type="entry name" value="TRYPSIN_SER"/>
    <property type="match status" value="1"/>
</dbReference>